<organism>
    <name type="scientific">Polaromonas naphthalenivorans (strain CJ2)</name>
    <dbReference type="NCBI Taxonomy" id="365044"/>
    <lineage>
        <taxon>Bacteria</taxon>
        <taxon>Pseudomonadati</taxon>
        <taxon>Pseudomonadota</taxon>
        <taxon>Betaproteobacteria</taxon>
        <taxon>Burkholderiales</taxon>
        <taxon>Comamonadaceae</taxon>
        <taxon>Polaromonas</taxon>
    </lineage>
</organism>
<comment type="function">
    <text evidence="1">Part of the MsrPQ system that repairs oxidized periplasmic proteins containing methionine sulfoxide residues (Met-O), using respiratory chain electrons. Thus protects these proteins from oxidative-stress damage caused by reactive species of oxygen and chlorine generated by the host defense mechanisms. MsrPQ is essential for the maintenance of envelope integrity under bleach stress, rescuing a wide series of structurally unrelated periplasmic proteins from methionine oxidation. MsrQ provides electrons for reduction to the reductase catalytic subunit MsrP, using the quinone pool of the respiratory chain.</text>
</comment>
<comment type="cofactor">
    <cofactor evidence="1">
        <name>FMN</name>
        <dbReference type="ChEBI" id="CHEBI:58210"/>
    </cofactor>
    <text evidence="1">Binds 1 FMN per subunit.</text>
</comment>
<comment type="cofactor">
    <cofactor evidence="1">
        <name>heme b</name>
        <dbReference type="ChEBI" id="CHEBI:60344"/>
    </cofactor>
    <text evidence="1">Binds 1 heme b (iron(II)-protoporphyrin IX) group per subunit.</text>
</comment>
<comment type="subunit">
    <text evidence="1">Heterodimer of a catalytic subunit (MsrP) and a heme-binding subunit (MsrQ).</text>
</comment>
<comment type="subcellular location">
    <subcellularLocation>
        <location evidence="1">Cell inner membrane</location>
        <topology evidence="1">Multi-pass membrane protein</topology>
    </subcellularLocation>
</comment>
<comment type="similarity">
    <text evidence="1">Belongs to the MsrQ family.</text>
</comment>
<feature type="chain" id="PRO_1000164664" description="Protein-methionine-sulfoxide reductase heme-binding subunit MsrQ">
    <location>
        <begin position="1"/>
        <end position="219"/>
    </location>
</feature>
<feature type="transmembrane region" description="Helical" evidence="1">
    <location>
        <begin position="17"/>
        <end position="37"/>
    </location>
</feature>
<feature type="transmembrane region" description="Helical" evidence="1">
    <location>
        <begin position="88"/>
        <end position="108"/>
    </location>
</feature>
<feature type="transmembrane region" description="Helical" evidence="1">
    <location>
        <begin position="121"/>
        <end position="141"/>
    </location>
</feature>
<feature type="transmembrane region" description="Helical" evidence="1">
    <location>
        <begin position="153"/>
        <end position="173"/>
    </location>
</feature>
<feature type="transmembrane region" description="Helical" evidence="1">
    <location>
        <begin position="184"/>
        <end position="204"/>
    </location>
</feature>
<evidence type="ECO:0000255" key="1">
    <source>
        <dbReference type="HAMAP-Rule" id="MF_01207"/>
    </source>
</evidence>
<sequence length="219" mass="24855">MAAWMAGRQKWLLHPAAKPLIFMVCLLPFAWLFYAAWSDQLGANPAEALVRATGDWTLRFVCIVLAVTPLRVITRTPALARFRRMLGLFAYFYVVLHLLSYSWFDMGFDVADIARDIAKRPFILVGFSAFVLLTPLAATSFNAAIKAMGAKRWQLLHKLVYLIAGLGLLHFFWMRAGKNNFNEVFVYAAIVALLLGWRVWNHWAKARRRVSNNAAVGVH</sequence>
<accession>A1VK09</accession>
<gene>
    <name evidence="1" type="primary">msrQ</name>
    <name type="ordered locus">Pnap_0668</name>
</gene>
<name>MSRQ_POLNA</name>
<reference key="1">
    <citation type="journal article" date="2009" name="Environ. Microbiol.">
        <title>The genome of Polaromonas naphthalenivorans strain CJ2, isolated from coal tar-contaminated sediment, reveals physiological and metabolic versatility and evolution through extensive horizontal gene transfer.</title>
        <authorList>
            <person name="Yagi J.M."/>
            <person name="Sims D."/>
            <person name="Brettin T."/>
            <person name="Bruce D."/>
            <person name="Madsen E.L."/>
        </authorList>
    </citation>
    <scope>NUCLEOTIDE SEQUENCE [LARGE SCALE GENOMIC DNA]</scope>
    <source>
        <strain>CJ2</strain>
    </source>
</reference>
<dbReference type="EMBL" id="CP000529">
    <property type="protein sequence ID" value="ABM35987.1"/>
    <property type="molecule type" value="Genomic_DNA"/>
</dbReference>
<dbReference type="RefSeq" id="WP_011800082.1">
    <property type="nucleotide sequence ID" value="NC_008781.1"/>
</dbReference>
<dbReference type="SMR" id="A1VK09"/>
<dbReference type="STRING" id="365044.Pnap_0668"/>
<dbReference type="KEGG" id="pna:Pnap_0668"/>
<dbReference type="eggNOG" id="COG2717">
    <property type="taxonomic scope" value="Bacteria"/>
</dbReference>
<dbReference type="HOGENOM" id="CLU_080662_0_0_4"/>
<dbReference type="OrthoDB" id="9788328at2"/>
<dbReference type="Proteomes" id="UP000000644">
    <property type="component" value="Chromosome"/>
</dbReference>
<dbReference type="GO" id="GO:0005886">
    <property type="term" value="C:plasma membrane"/>
    <property type="evidence" value="ECO:0007669"/>
    <property type="project" value="UniProtKB-SubCell"/>
</dbReference>
<dbReference type="GO" id="GO:0009055">
    <property type="term" value="F:electron transfer activity"/>
    <property type="evidence" value="ECO:0007669"/>
    <property type="project" value="UniProtKB-UniRule"/>
</dbReference>
<dbReference type="GO" id="GO:0010181">
    <property type="term" value="F:FMN binding"/>
    <property type="evidence" value="ECO:0007669"/>
    <property type="project" value="UniProtKB-UniRule"/>
</dbReference>
<dbReference type="GO" id="GO:0020037">
    <property type="term" value="F:heme binding"/>
    <property type="evidence" value="ECO:0007669"/>
    <property type="project" value="UniProtKB-UniRule"/>
</dbReference>
<dbReference type="GO" id="GO:0046872">
    <property type="term" value="F:metal ion binding"/>
    <property type="evidence" value="ECO:0007669"/>
    <property type="project" value="UniProtKB-KW"/>
</dbReference>
<dbReference type="GO" id="GO:0016679">
    <property type="term" value="F:oxidoreductase activity, acting on diphenols and related substances as donors"/>
    <property type="evidence" value="ECO:0007669"/>
    <property type="project" value="TreeGrafter"/>
</dbReference>
<dbReference type="GO" id="GO:0030091">
    <property type="term" value="P:protein repair"/>
    <property type="evidence" value="ECO:0007669"/>
    <property type="project" value="UniProtKB-UniRule"/>
</dbReference>
<dbReference type="HAMAP" id="MF_01207">
    <property type="entry name" value="MsrQ"/>
    <property type="match status" value="1"/>
</dbReference>
<dbReference type="InterPro" id="IPR013130">
    <property type="entry name" value="Fe3_Rdtase_TM_dom"/>
</dbReference>
<dbReference type="InterPro" id="IPR022837">
    <property type="entry name" value="MsrQ-like"/>
</dbReference>
<dbReference type="PANTHER" id="PTHR36964">
    <property type="entry name" value="PROTEIN-METHIONINE-SULFOXIDE REDUCTASE HEME-BINDING SUBUNIT MSRQ"/>
    <property type="match status" value="1"/>
</dbReference>
<dbReference type="PANTHER" id="PTHR36964:SF1">
    <property type="entry name" value="PROTEIN-METHIONINE-SULFOXIDE REDUCTASE HEME-BINDING SUBUNIT MSRQ"/>
    <property type="match status" value="1"/>
</dbReference>
<dbReference type="Pfam" id="PF01794">
    <property type="entry name" value="Ferric_reduct"/>
    <property type="match status" value="1"/>
</dbReference>
<keyword id="KW-0997">Cell inner membrane</keyword>
<keyword id="KW-1003">Cell membrane</keyword>
<keyword id="KW-0249">Electron transport</keyword>
<keyword id="KW-0285">Flavoprotein</keyword>
<keyword id="KW-0288">FMN</keyword>
<keyword id="KW-0349">Heme</keyword>
<keyword id="KW-0408">Iron</keyword>
<keyword id="KW-0472">Membrane</keyword>
<keyword id="KW-0479">Metal-binding</keyword>
<keyword id="KW-1185">Reference proteome</keyword>
<keyword id="KW-0812">Transmembrane</keyword>
<keyword id="KW-1133">Transmembrane helix</keyword>
<keyword id="KW-0813">Transport</keyword>
<proteinExistence type="inferred from homology"/>
<protein>
    <recommendedName>
        <fullName evidence="1">Protein-methionine-sulfoxide reductase heme-binding subunit MsrQ</fullName>
    </recommendedName>
    <alternativeName>
        <fullName evidence="1">Flavocytochrome MsrQ</fullName>
    </alternativeName>
</protein>